<name>RISB1_RHILO</name>
<feature type="chain" id="PRO_0000134793" description="6,7-dimethyl-8-ribityllumazine synthase 1">
    <location>
        <begin position="1"/>
        <end position="164"/>
    </location>
</feature>
<feature type="active site" description="Proton donor" evidence="2">
    <location>
        <position position="95"/>
    </location>
</feature>
<feature type="binding site" evidence="1">
    <location>
        <position position="27"/>
    </location>
    <ligand>
        <name>5-amino-6-(D-ribitylamino)uracil</name>
        <dbReference type="ChEBI" id="CHEBI:15934"/>
    </ligand>
</feature>
<feature type="binding site" evidence="1">
    <location>
        <begin position="58"/>
        <end position="60"/>
    </location>
    <ligand>
        <name>5-amino-6-(D-ribitylamino)uracil</name>
        <dbReference type="ChEBI" id="CHEBI:15934"/>
    </ligand>
</feature>
<feature type="binding site" evidence="1">
    <location>
        <begin position="87"/>
        <end position="89"/>
    </location>
    <ligand>
        <name>5-amino-6-(D-ribitylamino)uracil</name>
        <dbReference type="ChEBI" id="CHEBI:15934"/>
    </ligand>
</feature>
<feature type="binding site" evidence="1">
    <location>
        <begin position="92"/>
        <end position="93"/>
    </location>
    <ligand>
        <name>(2S)-2-hydroxy-3-oxobutyl phosphate</name>
        <dbReference type="ChEBI" id="CHEBI:58830"/>
    </ligand>
</feature>
<feature type="binding site" evidence="1">
    <location>
        <position position="120"/>
    </location>
    <ligand>
        <name>5-amino-6-(D-ribitylamino)uracil</name>
        <dbReference type="ChEBI" id="CHEBI:15934"/>
    </ligand>
</feature>
<feature type="binding site" evidence="1">
    <location>
        <position position="134"/>
    </location>
    <ligand>
        <name>(2S)-2-hydroxy-3-oxobutyl phosphate</name>
        <dbReference type="ChEBI" id="CHEBI:58830"/>
    </ligand>
</feature>
<protein>
    <recommendedName>
        <fullName>6,7-dimethyl-8-ribityllumazine synthase 1</fullName>
        <shortName>DMRL synthase 1</shortName>
        <shortName>LS 1</shortName>
        <shortName>Lumazine synthase 1</shortName>
        <ecNumber>2.5.1.78</ecNumber>
    </recommendedName>
    <alternativeName>
        <fullName>Type I lumazine synthase</fullName>
    </alternativeName>
</protein>
<sequence>MAGISQHGKAFIRPKAKAHLLIVEARFHDDLADALLDGATSALEEAGATYDVVTVPGSLEIPAVITFALDGAAEGGTNYDGFVALGTIIRGDTYHFDIVANESSRALMDMSVQDSVCIGNGILTTENDAQAWTRAKRSEGDKGGFAARAALTMIALKEQLGARS</sequence>
<organism>
    <name type="scientific">Mesorhizobium japonicum (strain LMG 29417 / CECT 9101 / MAFF 303099)</name>
    <name type="common">Mesorhizobium loti (strain MAFF 303099)</name>
    <dbReference type="NCBI Taxonomy" id="266835"/>
    <lineage>
        <taxon>Bacteria</taxon>
        <taxon>Pseudomonadati</taxon>
        <taxon>Pseudomonadota</taxon>
        <taxon>Alphaproteobacteria</taxon>
        <taxon>Hyphomicrobiales</taxon>
        <taxon>Phyllobacteriaceae</taxon>
        <taxon>Mesorhizobium</taxon>
    </lineage>
</organism>
<keyword id="KW-0686">Riboflavin biosynthesis</keyword>
<keyword id="KW-0808">Transferase</keyword>
<accession>Q983B0</accession>
<reference key="1">
    <citation type="journal article" date="2000" name="DNA Res.">
        <title>Complete genome structure of the nitrogen-fixing symbiotic bacterium Mesorhizobium loti.</title>
        <authorList>
            <person name="Kaneko T."/>
            <person name="Nakamura Y."/>
            <person name="Sato S."/>
            <person name="Asamizu E."/>
            <person name="Kato T."/>
            <person name="Sasamoto S."/>
            <person name="Watanabe A."/>
            <person name="Idesawa K."/>
            <person name="Ishikawa A."/>
            <person name="Kawashima K."/>
            <person name="Kimura T."/>
            <person name="Kishida Y."/>
            <person name="Kiyokawa C."/>
            <person name="Kohara M."/>
            <person name="Matsumoto M."/>
            <person name="Matsuno A."/>
            <person name="Mochizuki Y."/>
            <person name="Nakayama S."/>
            <person name="Nakazaki N."/>
            <person name="Shimpo S."/>
            <person name="Sugimoto M."/>
            <person name="Takeuchi C."/>
            <person name="Yamada M."/>
            <person name="Tabata S."/>
        </authorList>
    </citation>
    <scope>NUCLEOTIDE SEQUENCE [LARGE SCALE GENOMIC DNA]</scope>
    <source>
        <strain>LMG 29417 / CECT 9101 / MAFF 303099</strain>
    </source>
</reference>
<reference key="2">
    <citation type="journal article" date="2006" name="J. Bacteriol.">
        <title>Evolution of vitamin B2 biosynthesis: 6,7-dimethyl-8-ribityllumazine synthases of Brucella.</title>
        <authorList>
            <person name="Zylberman V."/>
            <person name="Klinke S."/>
            <person name="Haase I."/>
            <person name="Bacher A."/>
            <person name="Fischer M."/>
            <person name="Goldbaum F.A."/>
        </authorList>
    </citation>
    <scope>GENE NAME</scope>
</reference>
<reference key="3">
    <citation type="journal article" date="2007" name="J. Mol. Biol.">
        <title>Structural and kinetic properties of lumazine synthase isoenzymes in the order Rhizobiales.</title>
        <authorList>
            <person name="Klinke S."/>
            <person name="Zylberman V."/>
            <person name="Bonomi H.R."/>
            <person name="Haase I."/>
            <person name="Guimaraes B.G."/>
            <person name="Braden B.C."/>
            <person name="Bacher A."/>
            <person name="Fischer M."/>
            <person name="Goldbaum F.A."/>
        </authorList>
    </citation>
    <scope>FUNCTION</scope>
    <scope>CATALYTIC ACTIVITY</scope>
    <scope>KINETIC PARAMETERS</scope>
    <scope>SUBUNIT</scope>
</reference>
<gene>
    <name type="primary">ribH1</name>
    <name type="synonym">ribH</name>
    <name type="ordered locus">mlr8409</name>
</gene>
<comment type="function">
    <text evidence="3">Catalyzes the formation of 6,7-dimethyl-8-ribityllumazine by condensation of 5-amino-6-(D-ribitylamino)uracil with 3,4-dihydroxy-2-butanone 4-phosphate. This is the penultimate step in the biosynthesis of riboflavin.</text>
</comment>
<comment type="catalytic activity">
    <reaction evidence="3">
        <text>(2S)-2-hydroxy-3-oxobutyl phosphate + 5-amino-6-(D-ribitylamino)uracil = 6,7-dimethyl-8-(1-D-ribityl)lumazine + phosphate + 2 H2O + H(+)</text>
        <dbReference type="Rhea" id="RHEA:26152"/>
        <dbReference type="ChEBI" id="CHEBI:15377"/>
        <dbReference type="ChEBI" id="CHEBI:15378"/>
        <dbReference type="ChEBI" id="CHEBI:15934"/>
        <dbReference type="ChEBI" id="CHEBI:43474"/>
        <dbReference type="ChEBI" id="CHEBI:58201"/>
        <dbReference type="ChEBI" id="CHEBI:58830"/>
        <dbReference type="EC" id="2.5.1.78"/>
    </reaction>
</comment>
<comment type="biophysicochemical properties">
    <kinetics>
        <KM evidence="3">2.5 uM for 5-amino-6-(D-ribitylamino)uracil (at 37 degrees Celsius and pH 7.0)</KM>
        <KM evidence="3">15 uM for 3,4-dihydroxy-2-butanone 4-phosphate (at 37 degrees Celsius and pH 7.0)</KM>
        <text>kcat is 0.040 sec(-1) (at 37 degrees Celsius and pH 7.0).</text>
    </kinetics>
</comment>
<comment type="pathway">
    <text>Cofactor biosynthesis; riboflavin biosynthesis; riboflavin from 2-hydroxy-3-oxobutyl phosphate and 5-amino-6-(D-ribitylamino)uracil: step 1/2.</text>
</comment>
<comment type="subunit">
    <text evidence="3">Homopentamer.</text>
</comment>
<comment type="similarity">
    <text evidence="4">Belongs to the DMRL synthase family.</text>
</comment>
<evidence type="ECO:0000250" key="1"/>
<evidence type="ECO:0000255" key="2"/>
<evidence type="ECO:0000269" key="3">
    <source>
    </source>
</evidence>
<evidence type="ECO:0000305" key="4"/>
<proteinExistence type="evidence at protein level"/>
<dbReference type="EC" id="2.5.1.78"/>
<dbReference type="EMBL" id="BA000012">
    <property type="protein sequence ID" value="BAB54296.1"/>
    <property type="molecule type" value="Genomic_DNA"/>
</dbReference>
<dbReference type="RefSeq" id="WP_010915596.1">
    <property type="nucleotide sequence ID" value="NC_002678.2"/>
</dbReference>
<dbReference type="SMR" id="Q983B0"/>
<dbReference type="KEGG" id="mlo:mlr8409"/>
<dbReference type="PATRIC" id="fig|266835.9.peg.6724"/>
<dbReference type="eggNOG" id="COG0054">
    <property type="taxonomic scope" value="Bacteria"/>
</dbReference>
<dbReference type="HOGENOM" id="CLU_089358_1_2_5"/>
<dbReference type="BRENDA" id="2.5.1.78">
    <property type="organism ID" value="3243"/>
</dbReference>
<dbReference type="UniPathway" id="UPA00275">
    <property type="reaction ID" value="UER00404"/>
</dbReference>
<dbReference type="Proteomes" id="UP000000552">
    <property type="component" value="Chromosome"/>
</dbReference>
<dbReference type="GO" id="GO:0005829">
    <property type="term" value="C:cytosol"/>
    <property type="evidence" value="ECO:0007669"/>
    <property type="project" value="TreeGrafter"/>
</dbReference>
<dbReference type="GO" id="GO:0009349">
    <property type="term" value="C:riboflavin synthase complex"/>
    <property type="evidence" value="ECO:0007669"/>
    <property type="project" value="InterPro"/>
</dbReference>
<dbReference type="GO" id="GO:0000906">
    <property type="term" value="F:6,7-dimethyl-8-ribityllumazine synthase activity"/>
    <property type="evidence" value="ECO:0007669"/>
    <property type="project" value="UniProtKB-UniRule"/>
</dbReference>
<dbReference type="GO" id="GO:0009231">
    <property type="term" value="P:riboflavin biosynthetic process"/>
    <property type="evidence" value="ECO:0007669"/>
    <property type="project" value="UniProtKB-UniRule"/>
</dbReference>
<dbReference type="CDD" id="cd09209">
    <property type="entry name" value="Lumazine_synthase-I"/>
    <property type="match status" value="1"/>
</dbReference>
<dbReference type="Gene3D" id="3.40.50.960">
    <property type="entry name" value="Lumazine/riboflavin synthase"/>
    <property type="match status" value="1"/>
</dbReference>
<dbReference type="HAMAP" id="MF_00178">
    <property type="entry name" value="Lumazine_synth"/>
    <property type="match status" value="1"/>
</dbReference>
<dbReference type="InterPro" id="IPR034964">
    <property type="entry name" value="LS"/>
</dbReference>
<dbReference type="InterPro" id="IPR002180">
    <property type="entry name" value="LS/RS"/>
</dbReference>
<dbReference type="InterPro" id="IPR036467">
    <property type="entry name" value="LS/RS_sf"/>
</dbReference>
<dbReference type="NCBIfam" id="TIGR00114">
    <property type="entry name" value="lumazine-synth"/>
    <property type="match status" value="1"/>
</dbReference>
<dbReference type="PANTHER" id="PTHR21058:SF0">
    <property type="entry name" value="6,7-DIMETHYL-8-RIBITYLLUMAZINE SYNTHASE"/>
    <property type="match status" value="1"/>
</dbReference>
<dbReference type="PANTHER" id="PTHR21058">
    <property type="entry name" value="6,7-DIMETHYL-8-RIBITYLLUMAZINE SYNTHASE DMRL SYNTHASE LUMAZINE SYNTHASE"/>
    <property type="match status" value="1"/>
</dbReference>
<dbReference type="Pfam" id="PF00885">
    <property type="entry name" value="DMRL_synthase"/>
    <property type="match status" value="1"/>
</dbReference>
<dbReference type="SUPFAM" id="SSF52121">
    <property type="entry name" value="Lumazine synthase"/>
    <property type="match status" value="1"/>
</dbReference>